<proteinExistence type="evidence at protein level"/>
<evidence type="ECO:0000250" key="1">
    <source>
        <dbReference type="UniProtKB" id="Q96FX7"/>
    </source>
</evidence>
<evidence type="ECO:0000255" key="2">
    <source>
        <dbReference type="PROSITE-ProRule" id="PRU00952"/>
    </source>
</evidence>
<evidence type="ECO:0000269" key="3">
    <source>
    </source>
</evidence>
<evidence type="ECO:0000269" key="4">
    <source>
    </source>
</evidence>
<evidence type="ECO:0000269" key="5">
    <source>
    </source>
</evidence>
<evidence type="ECO:0000269" key="6">
    <source>
    </source>
</evidence>
<evidence type="ECO:0000269" key="7">
    <source>
    </source>
</evidence>
<evidence type="ECO:0000305" key="8">
    <source>
    </source>
</evidence>
<evidence type="ECO:0000312" key="9">
    <source>
        <dbReference type="PDB" id="5ERG"/>
    </source>
</evidence>
<evidence type="ECO:0007744" key="10">
    <source>
        <dbReference type="PDB" id="5EQJ"/>
    </source>
</evidence>
<evidence type="ECO:0007744" key="11">
    <source>
        <dbReference type="PDB" id="5ERG"/>
    </source>
</evidence>
<evidence type="ECO:0007744" key="12">
    <source>
    </source>
</evidence>
<evidence type="ECO:0007744" key="13">
    <source>
    </source>
</evidence>
<evidence type="ECO:0007829" key="14">
    <source>
        <dbReference type="PDB" id="5EQJ"/>
    </source>
</evidence>
<sequence>MSTNCFSGYKDLIKEGDLTLIWVSRDNIKPVRMHSEEVFNTRYGSFPHKDIIGKPYGSQIAIRTKGSNKFAFVHVLQPTPELWTLSLPHRTQIVYTPDSSYIMQRLNCSPHSRVIEAGTGSGSFSHAFARSVGHLFSFEFHHIRYEQALEEFKEHGLIDDNVTITHRDVCQGGFLIKKGDTTSYEFGNNETAASLNANVVFLDLPAPWDAIPHLDSVISVDEKVGLCCFSPCIEQVDKTLDVLEKYGWTDVEMVEIQGRQYESRRQMVRSLNDALERLRDIKRHKLQGVERRKRMFNNTIDSNDEKVGKRNEDGVPLTEKAKFNPFGKGSRIKEGDSNYKWKEVTKMEAEIKSHTSYLTFAFKVVNRSRDDEKVNEILRSTEK</sequence>
<protein>
    <recommendedName>
        <fullName>tRNA (adenine(58)-N(1))-methyltransferase catalytic subunit TRM61</fullName>
        <ecNumber>2.1.1.220</ecNumber>
    </recommendedName>
    <alternativeName>
        <fullName>General control non-derepressible protein 14</fullName>
        <shortName>Protein GCD14</shortName>
    </alternativeName>
    <alternativeName>
        <fullName>tRNA(m1A58)-methyltransferase subunit TRM61</fullName>
        <shortName>tRNA(m1A58)MTase subunit TRM61</shortName>
    </alternativeName>
</protein>
<accession>P46959</accession>
<accession>D6VW61</accession>
<feature type="chain" id="PRO_0000087437" description="tRNA (adenine(58)-N(1))-methyltransferase catalytic subunit TRM61">
    <location>
        <begin position="1"/>
        <end position="383"/>
    </location>
</feature>
<feature type="binding site" evidence="5 9">
    <location>
        <position position="94"/>
    </location>
    <ligand>
        <name>S-adenosyl-L-methionine</name>
        <dbReference type="ChEBI" id="CHEBI:59789"/>
    </ligand>
</feature>
<feature type="binding site" evidence="5 9">
    <location>
        <begin position="121"/>
        <end position="124"/>
    </location>
    <ligand>
        <name>S-adenosyl-L-methionine</name>
        <dbReference type="ChEBI" id="CHEBI:59789"/>
    </ligand>
</feature>
<feature type="binding site" evidence="5 9">
    <location>
        <position position="139"/>
    </location>
    <ligand>
        <name>S-adenosyl-L-methionine</name>
        <dbReference type="ChEBI" id="CHEBI:59789"/>
    </ligand>
</feature>
<feature type="binding site" evidence="1">
    <location>
        <position position="144"/>
    </location>
    <ligand>
        <name>S-adenosyl-L-methionine</name>
        <dbReference type="ChEBI" id="CHEBI:59789"/>
    </ligand>
</feature>
<feature type="binding site" evidence="5 9">
    <location>
        <begin position="168"/>
        <end position="169"/>
    </location>
    <ligand>
        <name>S-adenosyl-L-methionine</name>
        <dbReference type="ChEBI" id="CHEBI:59789"/>
    </ligand>
</feature>
<feature type="binding site" evidence="5 9">
    <location>
        <position position="203"/>
    </location>
    <ligand>
        <name>S-adenosyl-L-methionine</name>
        <dbReference type="ChEBI" id="CHEBI:59789"/>
    </ligand>
</feature>
<feature type="modified residue" description="Phosphoserine" evidence="12 13">
    <location>
        <position position="302"/>
    </location>
</feature>
<feature type="strand" evidence="14">
    <location>
        <begin position="18"/>
        <end position="24"/>
    </location>
</feature>
<feature type="strand" evidence="14">
    <location>
        <begin position="27"/>
        <end position="32"/>
    </location>
</feature>
<feature type="strand" evidence="14">
    <location>
        <begin position="38"/>
        <end position="41"/>
    </location>
</feature>
<feature type="strand" evidence="14">
    <location>
        <begin position="44"/>
        <end position="47"/>
    </location>
</feature>
<feature type="helix" evidence="14">
    <location>
        <begin position="48"/>
        <end position="50"/>
    </location>
</feature>
<feature type="turn" evidence="14">
    <location>
        <begin position="51"/>
        <end position="53"/>
    </location>
</feature>
<feature type="strand" evidence="14">
    <location>
        <begin position="58"/>
        <end position="62"/>
    </location>
</feature>
<feature type="strand" evidence="14">
    <location>
        <begin position="71"/>
        <end position="76"/>
    </location>
</feature>
<feature type="helix" evidence="14">
    <location>
        <begin position="80"/>
        <end position="86"/>
    </location>
</feature>
<feature type="helix" evidence="14">
    <location>
        <begin position="96"/>
        <end position="105"/>
    </location>
</feature>
<feature type="strand" evidence="14">
    <location>
        <begin position="113"/>
        <end position="117"/>
    </location>
</feature>
<feature type="helix" evidence="14">
    <location>
        <begin position="123"/>
        <end position="131"/>
    </location>
</feature>
<feature type="strand" evidence="14">
    <location>
        <begin position="133"/>
        <end position="141"/>
    </location>
</feature>
<feature type="helix" evidence="14">
    <location>
        <begin position="142"/>
        <end position="154"/>
    </location>
</feature>
<feature type="turn" evidence="14">
    <location>
        <begin position="158"/>
        <end position="161"/>
    </location>
</feature>
<feature type="strand" evidence="14">
    <location>
        <begin position="162"/>
        <end position="166"/>
    </location>
</feature>
<feature type="helix" evidence="14">
    <location>
        <begin position="169"/>
        <end position="172"/>
    </location>
</feature>
<feature type="strand" evidence="14">
    <location>
        <begin position="180"/>
        <end position="182"/>
    </location>
</feature>
<feature type="strand" evidence="14">
    <location>
        <begin position="197"/>
        <end position="202"/>
    </location>
</feature>
<feature type="helix" evidence="14">
    <location>
        <begin position="207"/>
        <end position="209"/>
    </location>
</feature>
<feature type="helix" evidence="14">
    <location>
        <begin position="211"/>
        <end position="216"/>
    </location>
</feature>
<feature type="strand" evidence="14">
    <location>
        <begin position="220"/>
        <end position="222"/>
    </location>
</feature>
<feature type="strand" evidence="14">
    <location>
        <begin position="224"/>
        <end position="232"/>
    </location>
</feature>
<feature type="helix" evidence="14">
    <location>
        <begin position="233"/>
        <end position="245"/>
    </location>
</feature>
<feature type="strand" evidence="14">
    <location>
        <begin position="249"/>
        <end position="267"/>
    </location>
</feature>
<feature type="helix" evidence="14">
    <location>
        <begin position="271"/>
        <end position="283"/>
    </location>
</feature>
<feature type="strand" evidence="14">
    <location>
        <begin position="341"/>
        <end position="347"/>
    </location>
</feature>
<feature type="strand" evidence="14">
    <location>
        <begin position="357"/>
        <end position="363"/>
    </location>
</feature>
<feature type="helix" evidence="14">
    <location>
        <begin position="371"/>
        <end position="375"/>
    </location>
</feature>
<organism>
    <name type="scientific">Saccharomyces cerevisiae (strain ATCC 204508 / S288c)</name>
    <name type="common">Baker's yeast</name>
    <dbReference type="NCBI Taxonomy" id="559292"/>
    <lineage>
        <taxon>Eukaryota</taxon>
        <taxon>Fungi</taxon>
        <taxon>Dikarya</taxon>
        <taxon>Ascomycota</taxon>
        <taxon>Saccharomycotina</taxon>
        <taxon>Saccharomycetes</taxon>
        <taxon>Saccharomycetales</taxon>
        <taxon>Saccharomycetaceae</taxon>
        <taxon>Saccharomyces</taxon>
    </lineage>
</organism>
<comment type="function">
    <text evidence="3 6 7">Catalytic subunit of tRNA (adenine-N(1)-)-methyltransferase, which catalyzes the formation of N(1)-methyladenine at position 58 (m1A58) in initiator methionyl-tRNA (PubMed:10779558, PubMed:9851972). GCD14 is also required for repression of GCN4 mRNA translation by the upstream open reading frames (uORFs) under conditions of amino acid sufficiency (PubMed:9539420).</text>
</comment>
<comment type="catalytic activity">
    <reaction evidence="2">
        <text>adenosine(58) in tRNA + S-adenosyl-L-methionine = N(1)-methyladenosine(58) in tRNA + S-adenosyl-L-homocysteine + H(+)</text>
        <dbReference type="Rhea" id="RHEA:43152"/>
        <dbReference type="Rhea" id="RHEA-COMP:10365"/>
        <dbReference type="Rhea" id="RHEA-COMP:10366"/>
        <dbReference type="ChEBI" id="CHEBI:15378"/>
        <dbReference type="ChEBI" id="CHEBI:57856"/>
        <dbReference type="ChEBI" id="CHEBI:59789"/>
        <dbReference type="ChEBI" id="CHEBI:74411"/>
        <dbReference type="ChEBI" id="CHEBI:74491"/>
        <dbReference type="EC" id="2.1.1.220"/>
    </reaction>
</comment>
<comment type="subunit">
    <text evidence="5 8">Heterotetramer; composed of two copies of TRM6/GCD10 and two copies of TRM61/GCD14.</text>
</comment>
<comment type="interaction">
    <interactant intactId="EBI-7416">
        <id>P46959</id>
    </interactant>
    <interactant intactId="EBI-8995">
        <id>P41814</id>
        <label>GCD10</label>
    </interactant>
    <organismsDiffer>false</organismsDiffer>
    <experiments>4</experiments>
</comment>
<comment type="subcellular location">
    <subcellularLocation>
        <location evidence="7">Nucleus</location>
    </subcellularLocation>
</comment>
<comment type="miscellaneous">
    <text evidence="4">Present with 7220 molecules/cell in log phase SD medium.</text>
</comment>
<comment type="similarity">
    <text evidence="2">Belongs to the class I-like SAM-binding methyltransferase superfamily. TRM61 family.</text>
</comment>
<name>TRM61_YEAST</name>
<keyword id="KW-0002">3D-structure</keyword>
<keyword id="KW-0489">Methyltransferase</keyword>
<keyword id="KW-0539">Nucleus</keyword>
<keyword id="KW-0597">Phosphoprotein</keyword>
<keyword id="KW-1185">Reference proteome</keyword>
<keyword id="KW-0678">Repressor</keyword>
<keyword id="KW-0949">S-adenosyl-L-methionine</keyword>
<keyword id="KW-0808">Transferase</keyword>
<keyword id="KW-0819">tRNA processing</keyword>
<reference key="1">
    <citation type="thesis" date="1996" institute="University of Salamanca" country="Spain">
        <authorList>
            <person name="Cuesta R."/>
        </authorList>
    </citation>
    <scope>NUCLEOTIDE SEQUENCE [GENOMIC DNA]</scope>
    <source>
        <strain>S288c / GRF88</strain>
    </source>
</reference>
<reference key="2">
    <citation type="journal article" date="1996" name="Yeast">
        <title>Sequencing analysis of a 40.2 kb fragment of yeast chromosome X reveals 19 open reading frames including URA2 (5' end), TRK1, PBS2, SPT10, GCD14, RPE1, PHO86, NCA3, ASF1, CCT7, GZF3, two tRNA genes, three remnant delta elements and a Ty4 transposon.</title>
        <authorList>
            <person name="Cziepluch C."/>
            <person name="Kordes E."/>
            <person name="Pujol A."/>
            <person name="Jauniaux J.-C."/>
        </authorList>
    </citation>
    <scope>NUCLEOTIDE SEQUENCE [GENOMIC DNA]</scope>
    <source>
        <strain>ATCC 96604 / S288c / FY1679</strain>
    </source>
</reference>
<reference key="3">
    <citation type="journal article" date="1996" name="EMBO J.">
        <title>Complete nucleotide sequence of Saccharomyces cerevisiae chromosome X.</title>
        <authorList>
            <person name="Galibert F."/>
            <person name="Alexandraki D."/>
            <person name="Baur A."/>
            <person name="Boles E."/>
            <person name="Chalwatzis N."/>
            <person name="Chuat J.-C."/>
            <person name="Coster F."/>
            <person name="Cziepluch C."/>
            <person name="de Haan M."/>
            <person name="Domdey H."/>
            <person name="Durand P."/>
            <person name="Entian K.-D."/>
            <person name="Gatius M."/>
            <person name="Goffeau A."/>
            <person name="Grivell L.A."/>
            <person name="Hennemann A."/>
            <person name="Herbert C.J."/>
            <person name="Heumann K."/>
            <person name="Hilger F."/>
            <person name="Hollenberg C.P."/>
            <person name="Huang M.-E."/>
            <person name="Jacq C."/>
            <person name="Jauniaux J.-C."/>
            <person name="Katsoulou C."/>
            <person name="Kirchrath L."/>
            <person name="Kleine K."/>
            <person name="Kordes E."/>
            <person name="Koetter P."/>
            <person name="Liebl S."/>
            <person name="Louis E.J."/>
            <person name="Manus V."/>
            <person name="Mewes H.-W."/>
            <person name="Miosga T."/>
            <person name="Obermaier B."/>
            <person name="Perea J."/>
            <person name="Pohl T.M."/>
            <person name="Portetelle D."/>
            <person name="Pujol A."/>
            <person name="Purnelle B."/>
            <person name="Ramezani Rad M."/>
            <person name="Rasmussen S.W."/>
            <person name="Rose M."/>
            <person name="Rossau R."/>
            <person name="Schaaff-Gerstenschlaeger I."/>
            <person name="Smits P.H.M."/>
            <person name="Scarcez T."/>
            <person name="Soriano N."/>
            <person name="To Van D."/>
            <person name="Tzermia M."/>
            <person name="Van Broekhoven A."/>
            <person name="Vandenbol M."/>
            <person name="Wedler H."/>
            <person name="von Wettstein D."/>
            <person name="Wambutt R."/>
            <person name="Zagulski M."/>
            <person name="Zollner A."/>
            <person name="Karpfinger-Hartl L."/>
        </authorList>
    </citation>
    <scope>NUCLEOTIDE SEQUENCE [LARGE SCALE GENOMIC DNA]</scope>
    <source>
        <strain>ATCC 204508 / S288c</strain>
    </source>
</reference>
<reference key="4">
    <citation type="journal article" date="2014" name="G3 (Bethesda)">
        <title>The reference genome sequence of Saccharomyces cerevisiae: Then and now.</title>
        <authorList>
            <person name="Engel S.R."/>
            <person name="Dietrich F.S."/>
            <person name="Fisk D.G."/>
            <person name="Binkley G."/>
            <person name="Balakrishnan R."/>
            <person name="Costanzo M.C."/>
            <person name="Dwight S.S."/>
            <person name="Hitz B.C."/>
            <person name="Karra K."/>
            <person name="Nash R.S."/>
            <person name="Weng S."/>
            <person name="Wong E.D."/>
            <person name="Lloyd P."/>
            <person name="Skrzypek M.S."/>
            <person name="Miyasato S.R."/>
            <person name="Simison M."/>
            <person name="Cherry J.M."/>
        </authorList>
    </citation>
    <scope>GENOME REANNOTATION</scope>
    <source>
        <strain>ATCC 204508 / S288c</strain>
    </source>
</reference>
<reference key="5">
    <citation type="journal article" date="1998" name="Genes Dev.">
        <title>The essential Gcd10p-Gcd14p nuclear complex is required for 1-methyladenosine modification and maturation of initiator methionyl-tRNA.</title>
        <authorList>
            <person name="Anderson J."/>
            <person name="Phan L."/>
            <person name="Cuesta R."/>
            <person name="Carlson B.A."/>
            <person name="Pak M."/>
            <person name="Asano K."/>
            <person name="Bjoerk G.R."/>
            <person name="Tamame M."/>
            <person name="Hinnebusch A.G."/>
        </authorList>
    </citation>
    <scope>FUNCTION AS A TRNA METHYLTRANSFERASE</scope>
    <scope>SUBUNIT</scope>
    <scope>SUBCELLULAR LOCATION</scope>
</reference>
<reference key="6">
    <citation type="journal article" date="1998" name="Genetics">
        <title>Identification of GCD14 and GCD15, novel genes required for translational repression of GCN4 mRNA in Saccharomyces cerevisiae.</title>
        <authorList>
            <person name="Cuesta R."/>
            <person name="Hinnebusch A.G."/>
            <person name="Tamame M."/>
        </authorList>
    </citation>
    <scope>FUNCTION IN TRANSLATIONAL REPRESSION</scope>
</reference>
<reference key="7">
    <citation type="journal article" date="2000" name="Proc. Natl. Acad. Sci. U.S.A.">
        <title>The Gcd10p/Gcd14p complex is the essential two-subunit tRNA(1-methyladenosine) methyltransferase of Saccharomyces cerevisiae.</title>
        <authorList>
            <person name="Anderson J."/>
            <person name="Phan L."/>
            <person name="Hinnebusch A.G."/>
        </authorList>
    </citation>
    <scope>FUNCTION AS A TRNA METHYLTRANSFERASE</scope>
</reference>
<reference key="8">
    <citation type="journal article" date="2003" name="Nature">
        <title>Global analysis of protein expression in yeast.</title>
        <authorList>
            <person name="Ghaemmaghami S."/>
            <person name="Huh W.-K."/>
            <person name="Bower K."/>
            <person name="Howson R.W."/>
            <person name="Belle A."/>
            <person name="Dephoure N."/>
            <person name="O'Shea E.K."/>
            <person name="Weissman J.S."/>
        </authorList>
    </citation>
    <scope>LEVEL OF PROTEIN EXPRESSION [LARGE SCALE ANALYSIS]</scope>
</reference>
<reference key="9">
    <citation type="journal article" date="2008" name="Mol. Cell. Proteomics">
        <title>A multidimensional chromatography technology for in-depth phosphoproteome analysis.</title>
        <authorList>
            <person name="Albuquerque C.P."/>
            <person name="Smolka M.B."/>
            <person name="Payne S.H."/>
            <person name="Bafna V."/>
            <person name="Eng J."/>
            <person name="Zhou H."/>
        </authorList>
    </citation>
    <scope>PHOSPHORYLATION [LARGE SCALE ANALYSIS] AT SER-302</scope>
    <scope>IDENTIFICATION BY MASS SPECTROMETRY [LARGE SCALE ANALYSIS]</scope>
</reference>
<reference key="10">
    <citation type="journal article" date="2009" name="Science">
        <title>Global analysis of Cdk1 substrate phosphorylation sites provides insights into evolution.</title>
        <authorList>
            <person name="Holt L.J."/>
            <person name="Tuch B.B."/>
            <person name="Villen J."/>
            <person name="Johnson A.D."/>
            <person name="Gygi S.P."/>
            <person name="Morgan D.O."/>
        </authorList>
    </citation>
    <scope>PHOSPHORYLATION [LARGE SCALE ANALYSIS] AT SER-302</scope>
    <scope>IDENTIFICATION BY MASS SPECTROMETRY [LARGE SCALE ANALYSIS]</scope>
</reference>
<reference evidence="10 11" key="11">
    <citation type="journal article" date="2016" name="Sci. Rep.">
        <title>Crystal structure of the two-subunit tRNA m(1)A58 methyltransferase TRM6-TRM61 from Saccharomyces cerevisiae.</title>
        <authorList>
            <person name="Wang M."/>
            <person name="Zhu Y."/>
            <person name="Wang C."/>
            <person name="Fan X."/>
            <person name="Jiang X."/>
            <person name="Ebrahimi M."/>
            <person name="Qiao Z."/>
            <person name="Niu L."/>
            <person name="Teng M."/>
            <person name="Li X."/>
        </authorList>
    </citation>
    <scope>X-RAY CRYSTALLOGRAPHY (2.20 ANGSTROMS)</scope>
</reference>
<dbReference type="EC" id="2.1.1.220"/>
<dbReference type="EMBL" id="Z54149">
    <property type="protein sequence ID" value="CAA90863.1"/>
    <property type="molecule type" value="Genomic_DNA"/>
</dbReference>
<dbReference type="EMBL" id="Z49400">
    <property type="protein sequence ID" value="CAA89420.1"/>
    <property type="molecule type" value="Genomic_DNA"/>
</dbReference>
<dbReference type="EMBL" id="BK006943">
    <property type="protein sequence ID" value="DAA08677.1"/>
    <property type="molecule type" value="Genomic_DNA"/>
</dbReference>
<dbReference type="PIR" id="S56906">
    <property type="entry name" value="S56906"/>
</dbReference>
<dbReference type="RefSeq" id="NP_012410.1">
    <property type="nucleotide sequence ID" value="NM_001181558.1"/>
</dbReference>
<dbReference type="PDB" id="5EQJ">
    <property type="method" value="X-ray"/>
    <property type="resolution" value="2.20 A"/>
    <property type="chains" value="B=1-383"/>
</dbReference>
<dbReference type="PDB" id="5ERG">
    <property type="method" value="X-ray"/>
    <property type="resolution" value="2.20 A"/>
    <property type="chains" value="B=1-383"/>
</dbReference>
<dbReference type="PDBsum" id="5EQJ"/>
<dbReference type="PDBsum" id="5ERG"/>
<dbReference type="SMR" id="P46959"/>
<dbReference type="BioGRID" id="33631">
    <property type="interactions" value="325"/>
</dbReference>
<dbReference type="ComplexPortal" id="CPX-1631">
    <property type="entry name" value="tRNA (adenine(58)-N(1))-methyltransferase complex"/>
</dbReference>
<dbReference type="DIP" id="DIP-5421N"/>
<dbReference type="FunCoup" id="P46959">
    <property type="interactions" value="765"/>
</dbReference>
<dbReference type="IntAct" id="P46959">
    <property type="interactions" value="17"/>
</dbReference>
<dbReference type="MINT" id="P46959"/>
<dbReference type="STRING" id="4932.YJL125C"/>
<dbReference type="GlyGen" id="P46959">
    <property type="glycosylation" value="1 site"/>
</dbReference>
<dbReference type="iPTMnet" id="P46959"/>
<dbReference type="PaxDb" id="4932-YJL125C"/>
<dbReference type="PeptideAtlas" id="P46959"/>
<dbReference type="EnsemblFungi" id="YJL125C_mRNA">
    <property type="protein sequence ID" value="YJL125C"/>
    <property type="gene ID" value="YJL125C"/>
</dbReference>
<dbReference type="GeneID" id="853317"/>
<dbReference type="KEGG" id="sce:YJL125C"/>
<dbReference type="AGR" id="SGD:S000003661"/>
<dbReference type="SGD" id="S000003661">
    <property type="gene designation" value="GCD14"/>
</dbReference>
<dbReference type="VEuPathDB" id="FungiDB:YJL125C"/>
<dbReference type="eggNOG" id="KOG2915">
    <property type="taxonomic scope" value="Eukaryota"/>
</dbReference>
<dbReference type="GeneTree" id="ENSGT00940000154239"/>
<dbReference type="HOGENOM" id="CLU_025402_4_0_1"/>
<dbReference type="InParanoid" id="P46959"/>
<dbReference type="OMA" id="RPDHRMI"/>
<dbReference type="OrthoDB" id="1925287at2759"/>
<dbReference type="BioCyc" id="MetaCyc:G3O-31576-MONOMER"/>
<dbReference type="BioCyc" id="YEAST:G3O-31576-MONOMER"/>
<dbReference type="BRENDA" id="2.1.1.220">
    <property type="organism ID" value="984"/>
</dbReference>
<dbReference type="BioGRID-ORCS" id="853317">
    <property type="hits" value="9 hits in 10 CRISPR screens"/>
</dbReference>
<dbReference type="PRO" id="PR:P46959"/>
<dbReference type="Proteomes" id="UP000002311">
    <property type="component" value="Chromosome X"/>
</dbReference>
<dbReference type="RNAct" id="P46959">
    <property type="molecule type" value="protein"/>
</dbReference>
<dbReference type="GO" id="GO:0005634">
    <property type="term" value="C:nucleus"/>
    <property type="evidence" value="ECO:0000314"/>
    <property type="project" value="ComplexPortal"/>
</dbReference>
<dbReference type="GO" id="GO:0031515">
    <property type="term" value="C:tRNA (m1A) methyltransferase complex"/>
    <property type="evidence" value="ECO:0000314"/>
    <property type="project" value="SGD"/>
</dbReference>
<dbReference type="GO" id="GO:0160107">
    <property type="term" value="F:tRNA (adenine(58)-N1)-methyltransferase activity"/>
    <property type="evidence" value="ECO:0007669"/>
    <property type="project" value="UniProtKB-EC"/>
</dbReference>
<dbReference type="GO" id="GO:0030488">
    <property type="term" value="P:tRNA methylation"/>
    <property type="evidence" value="ECO:0000314"/>
    <property type="project" value="ComplexPortal"/>
</dbReference>
<dbReference type="FunFam" id="3.10.330.20:FF:000002">
    <property type="entry name" value="tRNA (adenine(58)-N(1))-methyltransferase catalytic subunit TRMT61A"/>
    <property type="match status" value="1"/>
</dbReference>
<dbReference type="Gene3D" id="3.10.330.20">
    <property type="match status" value="1"/>
</dbReference>
<dbReference type="Gene3D" id="3.40.50.150">
    <property type="entry name" value="Vaccinia Virus protein VP39"/>
    <property type="match status" value="1"/>
</dbReference>
<dbReference type="InterPro" id="IPR029063">
    <property type="entry name" value="SAM-dependent_MTases_sf"/>
</dbReference>
<dbReference type="InterPro" id="IPR049470">
    <property type="entry name" value="TRM61_C"/>
</dbReference>
<dbReference type="InterPro" id="IPR014816">
    <property type="entry name" value="tRNA_MeTrfase_Gcd14"/>
</dbReference>
<dbReference type="PANTHER" id="PTHR12133">
    <property type="entry name" value="TRNA (ADENINE(58)-N(1))-METHYLTRANSFERASE"/>
    <property type="match status" value="1"/>
</dbReference>
<dbReference type="PANTHER" id="PTHR12133:SF2">
    <property type="entry name" value="TRNA (ADENINE(58)-N(1))-METHYLTRANSFERASE CATALYTIC SUBUNIT TRMT61A"/>
    <property type="match status" value="1"/>
</dbReference>
<dbReference type="Pfam" id="PF08704">
    <property type="entry name" value="GCD14"/>
    <property type="match status" value="1"/>
</dbReference>
<dbReference type="PIRSF" id="PIRSF017269">
    <property type="entry name" value="GCD14"/>
    <property type="match status" value="1"/>
</dbReference>
<dbReference type="SUPFAM" id="SSF53335">
    <property type="entry name" value="S-adenosyl-L-methionine-dependent methyltransferases"/>
    <property type="match status" value="1"/>
</dbReference>
<dbReference type="PROSITE" id="PS51620">
    <property type="entry name" value="SAM_TRM61"/>
    <property type="match status" value="1"/>
</dbReference>
<gene>
    <name type="primary">GCD14</name>
    <name type="synonym">TRM61</name>
    <name type="ordered locus">YJL125C</name>
    <name type="ORF">J0710</name>
</gene>